<dbReference type="EC" id="6.1.1.15" evidence="1"/>
<dbReference type="EMBL" id="CP000409">
    <property type="protein sequence ID" value="ABV73634.1"/>
    <property type="molecule type" value="Genomic_DNA"/>
</dbReference>
<dbReference type="RefSeq" id="WP_012148829.1">
    <property type="nucleotide sequence ID" value="NC_009879.1"/>
</dbReference>
<dbReference type="SMR" id="A8EZ51"/>
<dbReference type="STRING" id="293613.A1E_03495"/>
<dbReference type="KEGG" id="rcm:A1E_03495"/>
<dbReference type="eggNOG" id="COG0442">
    <property type="taxonomic scope" value="Bacteria"/>
</dbReference>
<dbReference type="HOGENOM" id="CLU_016739_4_2_5"/>
<dbReference type="Proteomes" id="UP000007056">
    <property type="component" value="Chromosome"/>
</dbReference>
<dbReference type="GO" id="GO:0005829">
    <property type="term" value="C:cytosol"/>
    <property type="evidence" value="ECO:0007669"/>
    <property type="project" value="TreeGrafter"/>
</dbReference>
<dbReference type="GO" id="GO:0005524">
    <property type="term" value="F:ATP binding"/>
    <property type="evidence" value="ECO:0007669"/>
    <property type="project" value="UniProtKB-UniRule"/>
</dbReference>
<dbReference type="GO" id="GO:0004827">
    <property type="term" value="F:proline-tRNA ligase activity"/>
    <property type="evidence" value="ECO:0007669"/>
    <property type="project" value="UniProtKB-UniRule"/>
</dbReference>
<dbReference type="GO" id="GO:0006433">
    <property type="term" value="P:prolyl-tRNA aminoacylation"/>
    <property type="evidence" value="ECO:0007669"/>
    <property type="project" value="UniProtKB-UniRule"/>
</dbReference>
<dbReference type="CDD" id="cd00861">
    <property type="entry name" value="ProRS_anticodon_short"/>
    <property type="match status" value="1"/>
</dbReference>
<dbReference type="CDD" id="cd00779">
    <property type="entry name" value="ProRS_core_prok"/>
    <property type="match status" value="1"/>
</dbReference>
<dbReference type="FunFam" id="3.30.930.10:FF:000042">
    <property type="entry name" value="probable proline--tRNA ligase, mitochondrial"/>
    <property type="match status" value="1"/>
</dbReference>
<dbReference type="FunFam" id="3.40.50.800:FF:000032">
    <property type="entry name" value="Proline--tRNA ligase"/>
    <property type="match status" value="1"/>
</dbReference>
<dbReference type="Gene3D" id="3.40.50.800">
    <property type="entry name" value="Anticodon-binding domain"/>
    <property type="match status" value="1"/>
</dbReference>
<dbReference type="Gene3D" id="3.30.930.10">
    <property type="entry name" value="Bira Bifunctional Protein, Domain 2"/>
    <property type="match status" value="1"/>
</dbReference>
<dbReference type="HAMAP" id="MF_01570">
    <property type="entry name" value="Pro_tRNA_synth_type2"/>
    <property type="match status" value="1"/>
</dbReference>
<dbReference type="InterPro" id="IPR002314">
    <property type="entry name" value="aa-tRNA-synt_IIb"/>
</dbReference>
<dbReference type="InterPro" id="IPR006195">
    <property type="entry name" value="aa-tRNA-synth_II"/>
</dbReference>
<dbReference type="InterPro" id="IPR045864">
    <property type="entry name" value="aa-tRNA-synth_II/BPL/LPL"/>
</dbReference>
<dbReference type="InterPro" id="IPR004154">
    <property type="entry name" value="Anticodon-bd"/>
</dbReference>
<dbReference type="InterPro" id="IPR036621">
    <property type="entry name" value="Anticodon-bd_dom_sf"/>
</dbReference>
<dbReference type="InterPro" id="IPR002316">
    <property type="entry name" value="Pro-tRNA-ligase_IIa"/>
</dbReference>
<dbReference type="InterPro" id="IPR004500">
    <property type="entry name" value="Pro-tRNA-synth_IIa_bac-type"/>
</dbReference>
<dbReference type="InterPro" id="IPR050062">
    <property type="entry name" value="Pro-tRNA_synthetase"/>
</dbReference>
<dbReference type="InterPro" id="IPR023716">
    <property type="entry name" value="Prolyl-tRNA_ligase_IIa_type2"/>
</dbReference>
<dbReference type="InterPro" id="IPR044140">
    <property type="entry name" value="ProRS_anticodon_short"/>
</dbReference>
<dbReference type="InterPro" id="IPR033730">
    <property type="entry name" value="ProRS_core_prok"/>
</dbReference>
<dbReference type="NCBIfam" id="NF008979">
    <property type="entry name" value="PRK12325.1"/>
    <property type="match status" value="1"/>
</dbReference>
<dbReference type="NCBIfam" id="TIGR00409">
    <property type="entry name" value="proS_fam_II"/>
    <property type="match status" value="1"/>
</dbReference>
<dbReference type="PANTHER" id="PTHR42753">
    <property type="entry name" value="MITOCHONDRIAL RIBOSOME PROTEIN L39/PROLYL-TRNA LIGASE FAMILY MEMBER"/>
    <property type="match status" value="1"/>
</dbReference>
<dbReference type="PANTHER" id="PTHR42753:SF2">
    <property type="entry name" value="PROLINE--TRNA LIGASE"/>
    <property type="match status" value="1"/>
</dbReference>
<dbReference type="Pfam" id="PF03129">
    <property type="entry name" value="HGTP_anticodon"/>
    <property type="match status" value="1"/>
</dbReference>
<dbReference type="Pfam" id="PF00587">
    <property type="entry name" value="tRNA-synt_2b"/>
    <property type="match status" value="1"/>
</dbReference>
<dbReference type="PRINTS" id="PR01046">
    <property type="entry name" value="TRNASYNTHPRO"/>
</dbReference>
<dbReference type="SUPFAM" id="SSF52954">
    <property type="entry name" value="Class II aaRS ABD-related"/>
    <property type="match status" value="1"/>
</dbReference>
<dbReference type="SUPFAM" id="SSF55681">
    <property type="entry name" value="Class II aaRS and biotin synthetases"/>
    <property type="match status" value="1"/>
</dbReference>
<dbReference type="PROSITE" id="PS50862">
    <property type="entry name" value="AA_TRNA_LIGASE_II"/>
    <property type="match status" value="1"/>
</dbReference>
<reference key="1">
    <citation type="submission" date="2007-09" db="EMBL/GenBank/DDBJ databases">
        <title>Complete genome sequence of Rickettsia canadensis.</title>
        <authorList>
            <person name="Madan A."/>
            <person name="Fahey J."/>
            <person name="Helton E."/>
            <person name="Ketteman M."/>
            <person name="Madan A."/>
            <person name="Rodrigues S."/>
            <person name="Sanchez A."/>
            <person name="Whiting M."/>
            <person name="Dasch G."/>
            <person name="Eremeeva M."/>
        </authorList>
    </citation>
    <scope>NUCLEOTIDE SEQUENCE [LARGE SCALE GENOMIC DNA]</scope>
    <source>
        <strain>McKiel</strain>
    </source>
</reference>
<evidence type="ECO:0000255" key="1">
    <source>
        <dbReference type="HAMAP-Rule" id="MF_01570"/>
    </source>
</evidence>
<protein>
    <recommendedName>
        <fullName evidence="1">Proline--tRNA ligase</fullName>
        <ecNumber evidence="1">6.1.1.15</ecNumber>
    </recommendedName>
    <alternativeName>
        <fullName evidence="1">Prolyl-tRNA synthetase</fullName>
        <shortName evidence="1">ProRS</shortName>
    </alternativeName>
</protein>
<gene>
    <name evidence="1" type="primary">proS</name>
    <name type="ordered locus">A1E_03495</name>
</gene>
<proteinExistence type="inferred from homology"/>
<organism>
    <name type="scientific">Rickettsia canadensis (strain McKiel)</name>
    <dbReference type="NCBI Taxonomy" id="293613"/>
    <lineage>
        <taxon>Bacteria</taxon>
        <taxon>Pseudomonadati</taxon>
        <taxon>Pseudomonadota</taxon>
        <taxon>Alphaproteobacteria</taxon>
        <taxon>Rickettsiales</taxon>
        <taxon>Rickettsiaceae</taxon>
        <taxon>Rickettsieae</taxon>
        <taxon>Rickettsia</taxon>
        <taxon>belli group</taxon>
    </lineage>
</organism>
<feature type="chain" id="PRO_1000069185" description="Proline--tRNA ligase">
    <location>
        <begin position="1"/>
        <end position="438"/>
    </location>
</feature>
<keyword id="KW-0030">Aminoacyl-tRNA synthetase</keyword>
<keyword id="KW-0067">ATP-binding</keyword>
<keyword id="KW-0963">Cytoplasm</keyword>
<keyword id="KW-0436">Ligase</keyword>
<keyword id="KW-0547">Nucleotide-binding</keyword>
<keyword id="KW-0648">Protein biosynthesis</keyword>
<name>SYP_RICCK</name>
<accession>A8EZ51</accession>
<sequence length="438" mass="50066">MLLSKYFLPVLKEEPSEAQITSHKLMLRSGMIRQQAAGIYTWLPLGLKILKNIENIVRSNMNKAGALEVLMPCIQPAHLWMESGRFENYGKEMLKFQDRHDNTLLFGPTNEDMITDIFRHNIKSYKDLPKNLYHIQWKFRDEIRPRFGVMRGREFLMKDAYSFDINEENAVKTYNQMFKTYINTFRDLGVFAIPVIADNGPIGGNLSNEFHIIAETGESTLYYDKRFKIFKDNPDIDVEEIKSWYAASEEKHDVNKLPISEQEITSSKGIEVGHIFYIGSKYSVNMNALINDEHGKLTPVEMSSYGIGISRLVAAIIEANCDEKGIIWPSSVAPFKVSLINLNIHDSKCTELAERAYKELSAQNIEVLYDDTDVRPGSKFATHDLIGSPYQIIIGPKKAANNIVEFKNRKSGVIEDIKIGNLKKLIMSCLRQQKSCNF</sequence>
<comment type="function">
    <text evidence="1">Catalyzes the attachment of proline to tRNA(Pro) in a two-step reaction: proline is first activated by ATP to form Pro-AMP and then transferred to the acceptor end of tRNA(Pro).</text>
</comment>
<comment type="catalytic activity">
    <reaction evidence="1">
        <text>tRNA(Pro) + L-proline + ATP = L-prolyl-tRNA(Pro) + AMP + diphosphate</text>
        <dbReference type="Rhea" id="RHEA:14305"/>
        <dbReference type="Rhea" id="RHEA-COMP:9700"/>
        <dbReference type="Rhea" id="RHEA-COMP:9702"/>
        <dbReference type="ChEBI" id="CHEBI:30616"/>
        <dbReference type="ChEBI" id="CHEBI:33019"/>
        <dbReference type="ChEBI" id="CHEBI:60039"/>
        <dbReference type="ChEBI" id="CHEBI:78442"/>
        <dbReference type="ChEBI" id="CHEBI:78532"/>
        <dbReference type="ChEBI" id="CHEBI:456215"/>
        <dbReference type="EC" id="6.1.1.15"/>
    </reaction>
</comment>
<comment type="subunit">
    <text evidence="1">Homodimer.</text>
</comment>
<comment type="subcellular location">
    <subcellularLocation>
        <location evidence="1">Cytoplasm</location>
    </subcellularLocation>
</comment>
<comment type="similarity">
    <text evidence="1">Belongs to the class-II aminoacyl-tRNA synthetase family. ProS type 2 subfamily.</text>
</comment>